<sequence length="256" mass="27399">MSLAVRVIPCLDVDAGRVVKGVHFENLKDAGDPVELAAEYYRQGADEITFLDVTASSSHRNTMIDVVSCTAEQVFIPMTVGGGVRTPEDVDSLLRCGADKVGVNTAAINDPSLISRVADRFGNQVLVLSVDARREKGEQHTQSGFEVTTMGGRKSTGIDAIWWVKRAEQLGAGEILLNSMDADGTKEGFDLEMIRAVRKEVKIPIIASGGAGKVEDFPPAIEAGADAVLAASVFHYGILTIADVKAELKKHGYTVR</sequence>
<gene>
    <name evidence="1" type="primary">hisF</name>
    <name type="ordered locus">BLD_0411</name>
</gene>
<evidence type="ECO:0000255" key="1">
    <source>
        <dbReference type="HAMAP-Rule" id="MF_01013"/>
    </source>
</evidence>
<reference key="1">
    <citation type="journal article" date="2008" name="BMC Genomics">
        <title>Comparative genomic analysis of the gut bacterium Bifidobacterium longum reveals loci susceptible to deletion during pure culture growth.</title>
        <authorList>
            <person name="Lee J.H."/>
            <person name="Karamychev V.N."/>
            <person name="Kozyavkin S.A."/>
            <person name="Mills D."/>
            <person name="Pavlov A.R."/>
            <person name="Pavlova N.V."/>
            <person name="Polouchine N.N."/>
            <person name="Richardson P.M."/>
            <person name="Shakhova V.V."/>
            <person name="Slesarev A.I."/>
            <person name="Weimer B."/>
            <person name="O'Sullivan D.J."/>
        </authorList>
    </citation>
    <scope>NUCLEOTIDE SEQUENCE [LARGE SCALE GENOMIC DNA]</scope>
    <source>
        <strain>DJO10A</strain>
    </source>
</reference>
<keyword id="KW-0028">Amino-acid biosynthesis</keyword>
<keyword id="KW-0963">Cytoplasm</keyword>
<keyword id="KW-0368">Histidine biosynthesis</keyword>
<keyword id="KW-0456">Lyase</keyword>
<comment type="function">
    <text evidence="1">IGPS catalyzes the conversion of PRFAR and glutamine to IGP, AICAR and glutamate. The HisF subunit catalyzes the cyclization activity that produces IGP and AICAR from PRFAR using the ammonia provided by the HisH subunit.</text>
</comment>
<comment type="catalytic activity">
    <reaction evidence="1">
        <text>5-[(5-phospho-1-deoxy-D-ribulos-1-ylimino)methylamino]-1-(5-phospho-beta-D-ribosyl)imidazole-4-carboxamide + L-glutamine = D-erythro-1-(imidazol-4-yl)glycerol 3-phosphate + 5-amino-1-(5-phospho-beta-D-ribosyl)imidazole-4-carboxamide + L-glutamate + H(+)</text>
        <dbReference type="Rhea" id="RHEA:24793"/>
        <dbReference type="ChEBI" id="CHEBI:15378"/>
        <dbReference type="ChEBI" id="CHEBI:29985"/>
        <dbReference type="ChEBI" id="CHEBI:58278"/>
        <dbReference type="ChEBI" id="CHEBI:58359"/>
        <dbReference type="ChEBI" id="CHEBI:58475"/>
        <dbReference type="ChEBI" id="CHEBI:58525"/>
        <dbReference type="EC" id="4.3.2.10"/>
    </reaction>
</comment>
<comment type="pathway">
    <text evidence="1">Amino-acid biosynthesis; L-histidine biosynthesis; L-histidine from 5-phospho-alpha-D-ribose 1-diphosphate: step 5/9.</text>
</comment>
<comment type="subunit">
    <text evidence="1">Heterodimer of HisH and HisF.</text>
</comment>
<comment type="subcellular location">
    <subcellularLocation>
        <location evidence="1">Cytoplasm</location>
    </subcellularLocation>
</comment>
<comment type="similarity">
    <text evidence="1">Belongs to the HisA/HisF family.</text>
</comment>
<proteinExistence type="inferred from homology"/>
<feature type="chain" id="PRO_1000134970" description="Imidazole glycerol phosphate synthase subunit HisF">
    <location>
        <begin position="1"/>
        <end position="256"/>
    </location>
</feature>
<feature type="active site" evidence="1">
    <location>
        <position position="12"/>
    </location>
</feature>
<feature type="active site" evidence="1">
    <location>
        <position position="131"/>
    </location>
</feature>
<name>HIS6_BIFLD</name>
<protein>
    <recommendedName>
        <fullName evidence="1">Imidazole glycerol phosphate synthase subunit HisF</fullName>
        <ecNumber evidence="1">4.3.2.10</ecNumber>
    </recommendedName>
    <alternativeName>
        <fullName evidence="1">IGP synthase cyclase subunit</fullName>
    </alternativeName>
    <alternativeName>
        <fullName evidence="1">IGP synthase subunit HisF</fullName>
    </alternativeName>
    <alternativeName>
        <fullName evidence="1">ImGP synthase subunit HisF</fullName>
        <shortName evidence="1">IGPS subunit HisF</shortName>
    </alternativeName>
</protein>
<dbReference type="EC" id="4.3.2.10" evidence="1"/>
<dbReference type="EMBL" id="CP000605">
    <property type="protein sequence ID" value="ACD97857.1"/>
    <property type="molecule type" value="Genomic_DNA"/>
</dbReference>
<dbReference type="RefSeq" id="WP_007054311.1">
    <property type="nucleotide sequence ID" value="NZ_AABM02000001.1"/>
</dbReference>
<dbReference type="SMR" id="B3DRT8"/>
<dbReference type="KEGG" id="blj:BLD_0411"/>
<dbReference type="HOGENOM" id="CLU_048577_4_0_11"/>
<dbReference type="UniPathway" id="UPA00031">
    <property type="reaction ID" value="UER00010"/>
</dbReference>
<dbReference type="Proteomes" id="UP000002419">
    <property type="component" value="Chromosome"/>
</dbReference>
<dbReference type="GO" id="GO:0005737">
    <property type="term" value="C:cytoplasm"/>
    <property type="evidence" value="ECO:0007669"/>
    <property type="project" value="UniProtKB-SubCell"/>
</dbReference>
<dbReference type="GO" id="GO:0000107">
    <property type="term" value="F:imidazoleglycerol-phosphate synthase activity"/>
    <property type="evidence" value="ECO:0007669"/>
    <property type="project" value="UniProtKB-UniRule"/>
</dbReference>
<dbReference type="GO" id="GO:0016829">
    <property type="term" value="F:lyase activity"/>
    <property type="evidence" value="ECO:0007669"/>
    <property type="project" value="UniProtKB-KW"/>
</dbReference>
<dbReference type="GO" id="GO:0000105">
    <property type="term" value="P:L-histidine biosynthetic process"/>
    <property type="evidence" value="ECO:0007669"/>
    <property type="project" value="UniProtKB-UniRule"/>
</dbReference>
<dbReference type="CDD" id="cd04731">
    <property type="entry name" value="HisF"/>
    <property type="match status" value="1"/>
</dbReference>
<dbReference type="FunFam" id="3.20.20.70:FF:000006">
    <property type="entry name" value="Imidazole glycerol phosphate synthase subunit HisF"/>
    <property type="match status" value="1"/>
</dbReference>
<dbReference type="Gene3D" id="3.20.20.70">
    <property type="entry name" value="Aldolase class I"/>
    <property type="match status" value="1"/>
</dbReference>
<dbReference type="HAMAP" id="MF_01013">
    <property type="entry name" value="HisF"/>
    <property type="match status" value="1"/>
</dbReference>
<dbReference type="InterPro" id="IPR013785">
    <property type="entry name" value="Aldolase_TIM"/>
</dbReference>
<dbReference type="InterPro" id="IPR006062">
    <property type="entry name" value="His_biosynth"/>
</dbReference>
<dbReference type="InterPro" id="IPR004651">
    <property type="entry name" value="HisF"/>
</dbReference>
<dbReference type="InterPro" id="IPR050064">
    <property type="entry name" value="IGPS_HisA/HisF"/>
</dbReference>
<dbReference type="InterPro" id="IPR011060">
    <property type="entry name" value="RibuloseP-bd_barrel"/>
</dbReference>
<dbReference type="NCBIfam" id="TIGR00735">
    <property type="entry name" value="hisF"/>
    <property type="match status" value="1"/>
</dbReference>
<dbReference type="PANTHER" id="PTHR21235:SF2">
    <property type="entry name" value="IMIDAZOLE GLYCEROL PHOSPHATE SYNTHASE HISHF"/>
    <property type="match status" value="1"/>
</dbReference>
<dbReference type="PANTHER" id="PTHR21235">
    <property type="entry name" value="IMIDAZOLE GLYCEROL PHOSPHATE SYNTHASE SUBUNIT HISF/H IGP SYNTHASE SUBUNIT HISF/H"/>
    <property type="match status" value="1"/>
</dbReference>
<dbReference type="Pfam" id="PF00977">
    <property type="entry name" value="His_biosynth"/>
    <property type="match status" value="1"/>
</dbReference>
<dbReference type="SUPFAM" id="SSF51366">
    <property type="entry name" value="Ribulose-phoshate binding barrel"/>
    <property type="match status" value="1"/>
</dbReference>
<accession>B3DRT8</accession>
<organism>
    <name type="scientific">Bifidobacterium longum (strain DJO10A)</name>
    <dbReference type="NCBI Taxonomy" id="205913"/>
    <lineage>
        <taxon>Bacteria</taxon>
        <taxon>Bacillati</taxon>
        <taxon>Actinomycetota</taxon>
        <taxon>Actinomycetes</taxon>
        <taxon>Bifidobacteriales</taxon>
        <taxon>Bifidobacteriaceae</taxon>
        <taxon>Bifidobacterium</taxon>
    </lineage>
</organism>